<reference key="1">
    <citation type="journal article" date="2005" name="Nucleic Acids Res.">
        <title>Genome dynamics and diversity of Shigella species, the etiologic agents of bacillary dysentery.</title>
        <authorList>
            <person name="Yang F."/>
            <person name="Yang J."/>
            <person name="Zhang X."/>
            <person name="Chen L."/>
            <person name="Jiang Y."/>
            <person name="Yan Y."/>
            <person name="Tang X."/>
            <person name="Wang J."/>
            <person name="Xiong Z."/>
            <person name="Dong J."/>
            <person name="Xue Y."/>
            <person name="Zhu Y."/>
            <person name="Xu X."/>
            <person name="Sun L."/>
            <person name="Chen S."/>
            <person name="Nie H."/>
            <person name="Peng J."/>
            <person name="Xu J."/>
            <person name="Wang Y."/>
            <person name="Yuan Z."/>
            <person name="Wen Y."/>
            <person name="Yao Z."/>
            <person name="Shen Y."/>
            <person name="Qiang B."/>
            <person name="Hou Y."/>
            <person name="Yu J."/>
            <person name="Jin Q."/>
        </authorList>
    </citation>
    <scope>NUCLEOTIDE SEQUENCE [LARGE SCALE GENOMIC DNA]</scope>
    <source>
        <strain>Ss046</strain>
    </source>
</reference>
<proteinExistence type="inferred from homology"/>
<comment type="function">
    <text evidence="1">Catalyzes the formation of 2'O-methylated cytidine (Cm32) or 2'O-methylated uridine (Um32) at position 32 in tRNA.</text>
</comment>
<comment type="catalytic activity">
    <reaction evidence="1">
        <text>cytidine(32) in tRNA + S-adenosyl-L-methionine = 2'-O-methylcytidine(32) in tRNA + S-adenosyl-L-homocysteine + H(+)</text>
        <dbReference type="Rhea" id="RHEA:42932"/>
        <dbReference type="Rhea" id="RHEA-COMP:10288"/>
        <dbReference type="Rhea" id="RHEA-COMP:10289"/>
        <dbReference type="ChEBI" id="CHEBI:15378"/>
        <dbReference type="ChEBI" id="CHEBI:57856"/>
        <dbReference type="ChEBI" id="CHEBI:59789"/>
        <dbReference type="ChEBI" id="CHEBI:74495"/>
        <dbReference type="ChEBI" id="CHEBI:82748"/>
        <dbReference type="EC" id="2.1.1.200"/>
    </reaction>
</comment>
<comment type="catalytic activity">
    <reaction evidence="1">
        <text>uridine(32) in tRNA + S-adenosyl-L-methionine = 2'-O-methyluridine(32) in tRNA + S-adenosyl-L-homocysteine + H(+)</text>
        <dbReference type="Rhea" id="RHEA:42936"/>
        <dbReference type="Rhea" id="RHEA-COMP:10107"/>
        <dbReference type="Rhea" id="RHEA-COMP:10290"/>
        <dbReference type="ChEBI" id="CHEBI:15378"/>
        <dbReference type="ChEBI" id="CHEBI:57856"/>
        <dbReference type="ChEBI" id="CHEBI:59789"/>
        <dbReference type="ChEBI" id="CHEBI:65315"/>
        <dbReference type="ChEBI" id="CHEBI:74478"/>
        <dbReference type="EC" id="2.1.1.200"/>
    </reaction>
</comment>
<comment type="subunit">
    <text evidence="1">Homodimer.</text>
</comment>
<comment type="subcellular location">
    <subcellularLocation>
        <location evidence="1">Cytoplasm</location>
    </subcellularLocation>
</comment>
<comment type="similarity">
    <text evidence="2">Belongs to the class IV-like SAM-binding methyltransferase superfamily. RNA methyltransferase TrmH family.</text>
</comment>
<accession>Q3YZ20</accession>
<keyword id="KW-0963">Cytoplasm</keyword>
<keyword id="KW-0489">Methyltransferase</keyword>
<keyword id="KW-1185">Reference proteome</keyword>
<keyword id="KW-0949">S-adenosyl-L-methionine</keyword>
<keyword id="KW-0808">Transferase</keyword>
<keyword id="KW-0819">tRNA processing</keyword>
<feature type="chain" id="PRO_0000313864" description="tRNA (cytidine/uridine-2'-O-)-methyltransferase TrmJ">
    <location>
        <begin position="1"/>
        <end position="245"/>
    </location>
</feature>
<feature type="binding site" evidence="1">
    <location>
        <begin position="79"/>
        <end position="81"/>
    </location>
    <ligand>
        <name>S-adenosyl-L-methionine</name>
        <dbReference type="ChEBI" id="CHEBI:59789"/>
    </ligand>
</feature>
<feature type="binding site" evidence="1">
    <location>
        <position position="114"/>
    </location>
    <ligand>
        <name>S-adenosyl-L-methionine</name>
        <dbReference type="ChEBI" id="CHEBI:59789"/>
    </ligand>
</feature>
<feature type="binding site" evidence="1">
    <location>
        <position position="134"/>
    </location>
    <ligand>
        <name>S-adenosyl-L-methionine</name>
        <dbReference type="ChEBI" id="CHEBI:59789"/>
    </ligand>
</feature>
<feature type="binding site" evidence="1">
    <location>
        <begin position="141"/>
        <end position="143"/>
    </location>
    <ligand>
        <name>S-adenosyl-L-methionine</name>
        <dbReference type="ChEBI" id="CHEBI:59789"/>
    </ligand>
</feature>
<sequence length="245" mass="26919">MLQNIRIVLVETSHTGNMGSVARAMKTMGLTNLWLVNPLVKPDSQAIALAAGASDVIGNAHIVDTLDEALAGCSLVVGTSARSRTLPWPMLDPRECGLKSVAEAANTPVALVFGRERVGLTNEELQKCHYHVAIAANPEYSSLNLAMAVQVIAYEVRMAWLATQENGEQVEHEETPYPLVDDLERFYGHLEQTLLATGFIRENHPGQVMNKLRRLFTRARPESQELNILRGILASIEQQNKGNKA</sequence>
<organism>
    <name type="scientific">Shigella sonnei (strain Ss046)</name>
    <dbReference type="NCBI Taxonomy" id="300269"/>
    <lineage>
        <taxon>Bacteria</taxon>
        <taxon>Pseudomonadati</taxon>
        <taxon>Pseudomonadota</taxon>
        <taxon>Gammaproteobacteria</taxon>
        <taxon>Enterobacterales</taxon>
        <taxon>Enterobacteriaceae</taxon>
        <taxon>Shigella</taxon>
    </lineage>
</organism>
<protein>
    <recommendedName>
        <fullName evidence="1">tRNA (cytidine/uridine-2'-O-)-methyltransferase TrmJ</fullName>
        <ecNumber evidence="1">2.1.1.200</ecNumber>
    </recommendedName>
    <alternativeName>
        <fullName evidence="1">tRNA (cytidine(32)/uridine(32)-2'-O)-methyltransferase</fullName>
    </alternativeName>
    <alternativeName>
        <fullName evidence="1">tRNA Cm32/Um32 methyltransferase</fullName>
    </alternativeName>
</protein>
<evidence type="ECO:0000250" key="1">
    <source>
        <dbReference type="UniProtKB" id="P0AE01"/>
    </source>
</evidence>
<evidence type="ECO:0000305" key="2"/>
<name>TRMJ_SHISS</name>
<gene>
    <name type="primary">trmJ</name>
    <name type="ordered locus">SSON_2614</name>
</gene>
<dbReference type="EC" id="2.1.1.200" evidence="1"/>
<dbReference type="EMBL" id="CP000038">
    <property type="protein sequence ID" value="AAZ89242.1"/>
    <property type="molecule type" value="Genomic_DNA"/>
</dbReference>
<dbReference type="RefSeq" id="WP_000940018.1">
    <property type="nucleotide sequence ID" value="NC_007384.1"/>
</dbReference>
<dbReference type="SMR" id="Q3YZ20"/>
<dbReference type="GeneID" id="93774604"/>
<dbReference type="KEGG" id="ssn:SSON_2614"/>
<dbReference type="HOGENOM" id="CLU_056931_0_1_6"/>
<dbReference type="Proteomes" id="UP000002529">
    <property type="component" value="Chromosome"/>
</dbReference>
<dbReference type="GO" id="GO:0005829">
    <property type="term" value="C:cytosol"/>
    <property type="evidence" value="ECO:0007669"/>
    <property type="project" value="TreeGrafter"/>
</dbReference>
<dbReference type="GO" id="GO:0003723">
    <property type="term" value="F:RNA binding"/>
    <property type="evidence" value="ECO:0007669"/>
    <property type="project" value="InterPro"/>
</dbReference>
<dbReference type="GO" id="GO:0160206">
    <property type="term" value="F:tRNA (cytidine(32)/uridine(32)-2'-O)-methyltransferase activity"/>
    <property type="evidence" value="ECO:0007669"/>
    <property type="project" value="UniProtKB-EC"/>
</dbReference>
<dbReference type="GO" id="GO:0002128">
    <property type="term" value="P:tRNA nucleoside ribose methylation"/>
    <property type="evidence" value="ECO:0007669"/>
    <property type="project" value="TreeGrafter"/>
</dbReference>
<dbReference type="CDD" id="cd18093">
    <property type="entry name" value="SpoU-like_TrmJ"/>
    <property type="match status" value="1"/>
</dbReference>
<dbReference type="FunFam" id="1.10.8.590:FF:000001">
    <property type="entry name" value="tRNA:Cm32/Um32 methyltransferase"/>
    <property type="match status" value="1"/>
</dbReference>
<dbReference type="FunFam" id="3.40.1280.10:FF:000006">
    <property type="entry name" value="Uncharacterized tRNA/rRNA methyltransferase HI_0380"/>
    <property type="match status" value="1"/>
</dbReference>
<dbReference type="Gene3D" id="1.10.8.590">
    <property type="match status" value="1"/>
</dbReference>
<dbReference type="Gene3D" id="3.40.1280.10">
    <property type="match status" value="1"/>
</dbReference>
<dbReference type="InterPro" id="IPR029028">
    <property type="entry name" value="Alpha/beta_knot_MTases"/>
</dbReference>
<dbReference type="InterPro" id="IPR004384">
    <property type="entry name" value="RNA_MeTrfase_TrmJ/LasT"/>
</dbReference>
<dbReference type="InterPro" id="IPR001537">
    <property type="entry name" value="SpoU_MeTrfase"/>
</dbReference>
<dbReference type="InterPro" id="IPR029026">
    <property type="entry name" value="tRNA_m1G_MTases_N"/>
</dbReference>
<dbReference type="NCBIfam" id="NF011694">
    <property type="entry name" value="PRK15114.1"/>
    <property type="match status" value="1"/>
</dbReference>
<dbReference type="NCBIfam" id="TIGR00050">
    <property type="entry name" value="rRNA_methyl_1"/>
    <property type="match status" value="1"/>
</dbReference>
<dbReference type="PANTHER" id="PTHR42786:SF2">
    <property type="entry name" value="TRNA (CYTIDINE_URIDINE-2'-O-)-METHYLTRANSFERASE TRMJ"/>
    <property type="match status" value="1"/>
</dbReference>
<dbReference type="PANTHER" id="PTHR42786">
    <property type="entry name" value="TRNA/RRNA METHYLTRANSFERASE"/>
    <property type="match status" value="1"/>
</dbReference>
<dbReference type="Pfam" id="PF00588">
    <property type="entry name" value="SpoU_methylase"/>
    <property type="match status" value="1"/>
</dbReference>
<dbReference type="PIRSF" id="PIRSF004808">
    <property type="entry name" value="LasT"/>
    <property type="match status" value="1"/>
</dbReference>
<dbReference type="SUPFAM" id="SSF75217">
    <property type="entry name" value="alpha/beta knot"/>
    <property type="match status" value="1"/>
</dbReference>